<proteinExistence type="inferred from homology"/>
<reference key="1">
    <citation type="submission" date="2007-07" db="EMBL/GenBank/DDBJ databases">
        <title>Complete sequence of Fervidobacterium nodosum Rt17-B1.</title>
        <authorList>
            <consortium name="US DOE Joint Genome Institute"/>
            <person name="Copeland A."/>
            <person name="Lucas S."/>
            <person name="Lapidus A."/>
            <person name="Barry K."/>
            <person name="Glavina del Rio T."/>
            <person name="Dalin E."/>
            <person name="Tice H."/>
            <person name="Pitluck S."/>
            <person name="Saunders E."/>
            <person name="Brettin T."/>
            <person name="Bruce D."/>
            <person name="Detter J.C."/>
            <person name="Han C."/>
            <person name="Schmutz J."/>
            <person name="Larimer F."/>
            <person name="Land M."/>
            <person name="Hauser L."/>
            <person name="Kyrpides N."/>
            <person name="Mikhailova N."/>
            <person name="Nelson K."/>
            <person name="Gogarten J.P."/>
            <person name="Noll K."/>
            <person name="Richardson P."/>
        </authorList>
    </citation>
    <scope>NUCLEOTIDE SEQUENCE [LARGE SCALE GENOMIC DNA]</scope>
    <source>
        <strain>ATCC 35602 / DSM 5306 / Rt17-B1</strain>
    </source>
</reference>
<keyword id="KW-0963">Cytoplasm</keyword>
<keyword id="KW-0238">DNA-binding</keyword>
<keyword id="KW-1185">Reference proteome</keyword>
<keyword id="KW-0804">Transcription</keyword>
<keyword id="KW-0805">Transcription regulation</keyword>
<evidence type="ECO:0000255" key="1">
    <source>
        <dbReference type="HAMAP-Rule" id="MF_00693"/>
    </source>
</evidence>
<sequence length="252" mass="27549">MSGHNKWANIKHRKAAQDAKRSKIFTKLIREIIVAAREGGGNPDTNPRLRAVLEKAREANMPKDTVERSIKKGTGELEGEKYEEIIYEAYAPGGVALYILALTDNKNRTAQELRHILSKNGGSLAESGSVAWIFERKGAIEISASKISDMDEFTLLAIDAGAEDIEEGDPVIVYVAPESLTAVKEALAKNGFEGESKITYKPKNTVKVTGSDAEKVLKLIDALEDNDDVQEVFGNFDIDDAELEAIMAKLEG</sequence>
<comment type="subcellular location">
    <subcellularLocation>
        <location evidence="1">Cytoplasm</location>
    </subcellularLocation>
</comment>
<comment type="similarity">
    <text evidence="1">Belongs to the TACO1 family.</text>
</comment>
<dbReference type="EMBL" id="CP000771">
    <property type="protein sequence ID" value="ABS60953.1"/>
    <property type="molecule type" value="Genomic_DNA"/>
</dbReference>
<dbReference type="RefSeq" id="WP_011994266.1">
    <property type="nucleotide sequence ID" value="NC_009718.1"/>
</dbReference>
<dbReference type="SMR" id="A7HM20"/>
<dbReference type="STRING" id="381764.Fnod_1106"/>
<dbReference type="KEGG" id="fno:Fnod_1106"/>
<dbReference type="eggNOG" id="COG0217">
    <property type="taxonomic scope" value="Bacteria"/>
</dbReference>
<dbReference type="HOGENOM" id="CLU_062974_2_2_0"/>
<dbReference type="OrthoDB" id="9781053at2"/>
<dbReference type="Proteomes" id="UP000002415">
    <property type="component" value="Chromosome"/>
</dbReference>
<dbReference type="GO" id="GO:0005829">
    <property type="term" value="C:cytosol"/>
    <property type="evidence" value="ECO:0007669"/>
    <property type="project" value="TreeGrafter"/>
</dbReference>
<dbReference type="GO" id="GO:0003677">
    <property type="term" value="F:DNA binding"/>
    <property type="evidence" value="ECO:0007669"/>
    <property type="project" value="UniProtKB-UniRule"/>
</dbReference>
<dbReference type="GO" id="GO:0006355">
    <property type="term" value="P:regulation of DNA-templated transcription"/>
    <property type="evidence" value="ECO:0007669"/>
    <property type="project" value="UniProtKB-UniRule"/>
</dbReference>
<dbReference type="FunFam" id="1.10.10.200:FF:000001">
    <property type="entry name" value="Probable transcriptional regulatory protein YebC"/>
    <property type="match status" value="1"/>
</dbReference>
<dbReference type="Gene3D" id="1.10.10.200">
    <property type="match status" value="1"/>
</dbReference>
<dbReference type="Gene3D" id="3.30.70.980">
    <property type="match status" value="2"/>
</dbReference>
<dbReference type="HAMAP" id="MF_00693">
    <property type="entry name" value="Transcrip_reg_TACO1"/>
    <property type="match status" value="1"/>
</dbReference>
<dbReference type="InterPro" id="IPR017856">
    <property type="entry name" value="Integrase-like_N"/>
</dbReference>
<dbReference type="InterPro" id="IPR048300">
    <property type="entry name" value="TACO1_YebC-like_2nd/3rd_dom"/>
</dbReference>
<dbReference type="InterPro" id="IPR049083">
    <property type="entry name" value="TACO1_YebC_N"/>
</dbReference>
<dbReference type="InterPro" id="IPR002876">
    <property type="entry name" value="Transcrip_reg_TACO1-like"/>
</dbReference>
<dbReference type="InterPro" id="IPR026564">
    <property type="entry name" value="Transcrip_reg_TACO1-like_dom3"/>
</dbReference>
<dbReference type="InterPro" id="IPR029072">
    <property type="entry name" value="YebC-like"/>
</dbReference>
<dbReference type="NCBIfam" id="NF001030">
    <property type="entry name" value="PRK00110.1"/>
    <property type="match status" value="1"/>
</dbReference>
<dbReference type="NCBIfam" id="NF009044">
    <property type="entry name" value="PRK12378.1"/>
    <property type="match status" value="1"/>
</dbReference>
<dbReference type="NCBIfam" id="TIGR01033">
    <property type="entry name" value="YebC/PmpR family DNA-binding transcriptional regulator"/>
    <property type="match status" value="1"/>
</dbReference>
<dbReference type="PANTHER" id="PTHR12532:SF6">
    <property type="entry name" value="TRANSCRIPTIONAL REGULATORY PROTEIN YEBC-RELATED"/>
    <property type="match status" value="1"/>
</dbReference>
<dbReference type="PANTHER" id="PTHR12532">
    <property type="entry name" value="TRANSLATIONAL ACTIVATOR OF CYTOCHROME C OXIDASE 1"/>
    <property type="match status" value="1"/>
</dbReference>
<dbReference type="Pfam" id="PF20772">
    <property type="entry name" value="TACO1_YebC_N"/>
    <property type="match status" value="1"/>
</dbReference>
<dbReference type="Pfam" id="PF01709">
    <property type="entry name" value="Transcrip_reg"/>
    <property type="match status" value="1"/>
</dbReference>
<dbReference type="SUPFAM" id="SSF75625">
    <property type="entry name" value="YebC-like"/>
    <property type="match status" value="1"/>
</dbReference>
<protein>
    <recommendedName>
        <fullName evidence="1">Probable transcriptional regulatory protein Fnod_1106</fullName>
    </recommendedName>
</protein>
<accession>A7HM20</accession>
<gene>
    <name type="ordered locus">Fnod_1106</name>
</gene>
<organism>
    <name type="scientific">Fervidobacterium nodosum (strain ATCC 35602 / DSM 5306 / Rt17-B1)</name>
    <dbReference type="NCBI Taxonomy" id="381764"/>
    <lineage>
        <taxon>Bacteria</taxon>
        <taxon>Thermotogati</taxon>
        <taxon>Thermotogota</taxon>
        <taxon>Thermotogae</taxon>
        <taxon>Thermotogales</taxon>
        <taxon>Fervidobacteriaceae</taxon>
        <taxon>Fervidobacterium</taxon>
    </lineage>
</organism>
<feature type="chain" id="PRO_1000072753" description="Probable transcriptional regulatory protein Fnod_1106">
    <location>
        <begin position="1"/>
        <end position="252"/>
    </location>
</feature>
<name>Y1106_FERNB</name>